<accession>B2RIY8</accession>
<organism>
    <name type="scientific">Porphyromonas gingivalis (strain ATCC 33277 / DSM 20709 / CIP 103683 / JCM 12257 / NCTC 11834 / 2561)</name>
    <dbReference type="NCBI Taxonomy" id="431947"/>
    <lineage>
        <taxon>Bacteria</taxon>
        <taxon>Pseudomonadati</taxon>
        <taxon>Bacteroidota</taxon>
        <taxon>Bacteroidia</taxon>
        <taxon>Bacteroidales</taxon>
        <taxon>Porphyromonadaceae</taxon>
        <taxon>Porphyromonas</taxon>
    </lineage>
</organism>
<comment type="function">
    <text evidence="1">Catalyzes the reversible transfer of the terminal phosphate group between ATP and AMP. Plays an important role in cellular energy homeostasis and in adenine nucleotide metabolism.</text>
</comment>
<comment type="catalytic activity">
    <reaction evidence="1">
        <text>AMP + ATP = 2 ADP</text>
        <dbReference type="Rhea" id="RHEA:12973"/>
        <dbReference type="ChEBI" id="CHEBI:30616"/>
        <dbReference type="ChEBI" id="CHEBI:456215"/>
        <dbReference type="ChEBI" id="CHEBI:456216"/>
        <dbReference type="EC" id="2.7.4.3"/>
    </reaction>
</comment>
<comment type="pathway">
    <text evidence="1">Purine metabolism; AMP biosynthesis via salvage pathway; AMP from ADP: step 1/1.</text>
</comment>
<comment type="subunit">
    <text evidence="1">Monomer.</text>
</comment>
<comment type="subcellular location">
    <subcellularLocation>
        <location evidence="1">Cytoplasm</location>
    </subcellularLocation>
</comment>
<comment type="domain">
    <text evidence="1">Consists of three domains, a large central CORE domain and two small peripheral domains, NMPbind and LID, which undergo movements during catalysis. The LID domain closes over the site of phosphoryl transfer upon ATP binding. Assembling and dissambling the active center during each catalytic cycle provides an effective means to prevent ATP hydrolysis.</text>
</comment>
<comment type="similarity">
    <text evidence="1">Belongs to the adenylate kinase family.</text>
</comment>
<protein>
    <recommendedName>
        <fullName evidence="1">Adenylate kinase</fullName>
        <shortName evidence="1">AK</shortName>
        <ecNumber evidence="1">2.7.4.3</ecNumber>
    </recommendedName>
    <alternativeName>
        <fullName evidence="1">ATP-AMP transphosphorylase</fullName>
    </alternativeName>
    <alternativeName>
        <fullName evidence="1">ATP:AMP phosphotransferase</fullName>
    </alternativeName>
    <alternativeName>
        <fullName evidence="1">Adenylate monophosphate kinase</fullName>
    </alternativeName>
</protein>
<evidence type="ECO:0000255" key="1">
    <source>
        <dbReference type="HAMAP-Rule" id="MF_00235"/>
    </source>
</evidence>
<reference key="1">
    <citation type="journal article" date="2008" name="DNA Res.">
        <title>Determination of the genome sequence of Porphyromonas gingivalis strain ATCC 33277 and genomic comparison with strain W83 revealed extensive genome rearrangements in P. gingivalis.</title>
        <authorList>
            <person name="Naito M."/>
            <person name="Hirakawa H."/>
            <person name="Yamashita A."/>
            <person name="Ohara N."/>
            <person name="Shoji M."/>
            <person name="Yukitake H."/>
            <person name="Nakayama K."/>
            <person name="Toh H."/>
            <person name="Yoshimura F."/>
            <person name="Kuhara S."/>
            <person name="Hattori M."/>
            <person name="Hayashi T."/>
            <person name="Nakayama K."/>
        </authorList>
    </citation>
    <scope>NUCLEOTIDE SEQUENCE [LARGE SCALE GENOMIC DNA]</scope>
    <source>
        <strain>ATCC 33277 / DSM 20709 / CIP 103683 / JCM 12257 / NCTC 11834 / 2561</strain>
    </source>
</reference>
<keyword id="KW-0067">ATP-binding</keyword>
<keyword id="KW-0963">Cytoplasm</keyword>
<keyword id="KW-0418">Kinase</keyword>
<keyword id="KW-0545">Nucleotide biosynthesis</keyword>
<keyword id="KW-0547">Nucleotide-binding</keyword>
<keyword id="KW-0808">Transferase</keyword>
<name>KAD_PORG3</name>
<gene>
    <name evidence="1" type="primary">adk</name>
    <name type="ordered locus">PGN_0814</name>
</gene>
<feature type="chain" id="PRO_1000100592" description="Adenylate kinase">
    <location>
        <begin position="1"/>
        <end position="194"/>
    </location>
</feature>
<feature type="region of interest" description="NMP" evidence="1">
    <location>
        <begin position="31"/>
        <end position="60"/>
    </location>
</feature>
<feature type="region of interest" description="LID" evidence="1">
    <location>
        <begin position="127"/>
        <end position="137"/>
    </location>
</feature>
<feature type="binding site" evidence="1">
    <location>
        <begin position="11"/>
        <end position="16"/>
    </location>
    <ligand>
        <name>ATP</name>
        <dbReference type="ChEBI" id="CHEBI:30616"/>
    </ligand>
</feature>
<feature type="binding site" evidence="1">
    <location>
        <position position="32"/>
    </location>
    <ligand>
        <name>AMP</name>
        <dbReference type="ChEBI" id="CHEBI:456215"/>
    </ligand>
</feature>
<feature type="binding site" evidence="1">
    <location>
        <position position="37"/>
    </location>
    <ligand>
        <name>AMP</name>
        <dbReference type="ChEBI" id="CHEBI:456215"/>
    </ligand>
</feature>
<feature type="binding site" evidence="1">
    <location>
        <begin position="58"/>
        <end position="60"/>
    </location>
    <ligand>
        <name>AMP</name>
        <dbReference type="ChEBI" id="CHEBI:456215"/>
    </ligand>
</feature>
<feature type="binding site" evidence="1">
    <location>
        <begin position="86"/>
        <end position="89"/>
    </location>
    <ligand>
        <name>AMP</name>
        <dbReference type="ChEBI" id="CHEBI:456215"/>
    </ligand>
</feature>
<feature type="binding site" evidence="1">
    <location>
        <position position="93"/>
    </location>
    <ligand>
        <name>AMP</name>
        <dbReference type="ChEBI" id="CHEBI:456215"/>
    </ligand>
</feature>
<feature type="binding site" evidence="1">
    <location>
        <position position="128"/>
    </location>
    <ligand>
        <name>ATP</name>
        <dbReference type="ChEBI" id="CHEBI:30616"/>
    </ligand>
</feature>
<feature type="binding site" evidence="1">
    <location>
        <position position="134"/>
    </location>
    <ligand>
        <name>AMP</name>
        <dbReference type="ChEBI" id="CHEBI:456215"/>
    </ligand>
</feature>
<feature type="binding site" evidence="1">
    <location>
        <position position="145"/>
    </location>
    <ligand>
        <name>AMP</name>
        <dbReference type="ChEBI" id="CHEBI:456215"/>
    </ligand>
</feature>
<feature type="binding site" evidence="1">
    <location>
        <position position="173"/>
    </location>
    <ligand>
        <name>ATP</name>
        <dbReference type="ChEBI" id="CHEBI:30616"/>
    </ligand>
</feature>
<sequence>MLNVLIFGAPGSGKGTQSEELIRRYGFRHISTGELLRAEIKAQTELGQAAAGYINEGHLVPDSLIVDMMEKLISTLVDTEGIIFDGFPRTIPQAEAMETMLAHHGWKVDIVLNLQVPEEMLIERLLNRGKISGRSDDNIETIRKRLDVYANETAPLVDFFTRKNVLHNVVGTGTIEEIALRIAPIVDKFRKVSN</sequence>
<proteinExistence type="inferred from homology"/>
<dbReference type="EC" id="2.7.4.3" evidence="1"/>
<dbReference type="EMBL" id="AP009380">
    <property type="protein sequence ID" value="BAG33333.1"/>
    <property type="molecule type" value="Genomic_DNA"/>
</dbReference>
<dbReference type="RefSeq" id="WP_004585325.1">
    <property type="nucleotide sequence ID" value="NZ_CP025930.1"/>
</dbReference>
<dbReference type="SMR" id="B2RIY8"/>
<dbReference type="GeneID" id="29256033"/>
<dbReference type="KEGG" id="pgn:PGN_0814"/>
<dbReference type="eggNOG" id="COG0563">
    <property type="taxonomic scope" value="Bacteria"/>
</dbReference>
<dbReference type="HOGENOM" id="CLU_032354_4_1_10"/>
<dbReference type="OrthoDB" id="9805030at2"/>
<dbReference type="BioCyc" id="PGIN431947:G1G2V-892-MONOMER"/>
<dbReference type="UniPathway" id="UPA00588">
    <property type="reaction ID" value="UER00649"/>
</dbReference>
<dbReference type="Proteomes" id="UP000008842">
    <property type="component" value="Chromosome"/>
</dbReference>
<dbReference type="GO" id="GO:0005737">
    <property type="term" value="C:cytoplasm"/>
    <property type="evidence" value="ECO:0007669"/>
    <property type="project" value="UniProtKB-SubCell"/>
</dbReference>
<dbReference type="GO" id="GO:0004017">
    <property type="term" value="F:adenylate kinase activity"/>
    <property type="evidence" value="ECO:0007669"/>
    <property type="project" value="UniProtKB-UniRule"/>
</dbReference>
<dbReference type="GO" id="GO:0005524">
    <property type="term" value="F:ATP binding"/>
    <property type="evidence" value="ECO:0007669"/>
    <property type="project" value="UniProtKB-UniRule"/>
</dbReference>
<dbReference type="GO" id="GO:0044209">
    <property type="term" value="P:AMP salvage"/>
    <property type="evidence" value="ECO:0007669"/>
    <property type="project" value="UniProtKB-UniRule"/>
</dbReference>
<dbReference type="CDD" id="cd01428">
    <property type="entry name" value="ADK"/>
    <property type="match status" value="1"/>
</dbReference>
<dbReference type="Gene3D" id="3.40.50.300">
    <property type="entry name" value="P-loop containing nucleotide triphosphate hydrolases"/>
    <property type="match status" value="1"/>
</dbReference>
<dbReference type="HAMAP" id="MF_00235">
    <property type="entry name" value="Adenylate_kinase_Adk"/>
    <property type="match status" value="1"/>
</dbReference>
<dbReference type="InterPro" id="IPR000850">
    <property type="entry name" value="Adenylat/UMP-CMP_kin"/>
</dbReference>
<dbReference type="InterPro" id="IPR033690">
    <property type="entry name" value="Adenylat_kinase_CS"/>
</dbReference>
<dbReference type="InterPro" id="IPR027417">
    <property type="entry name" value="P-loop_NTPase"/>
</dbReference>
<dbReference type="NCBIfam" id="NF001381">
    <property type="entry name" value="PRK00279.1-3"/>
    <property type="match status" value="1"/>
</dbReference>
<dbReference type="NCBIfam" id="NF011100">
    <property type="entry name" value="PRK14527.1"/>
    <property type="match status" value="1"/>
</dbReference>
<dbReference type="NCBIfam" id="NF011104">
    <property type="entry name" value="PRK14531.1"/>
    <property type="match status" value="1"/>
</dbReference>
<dbReference type="NCBIfam" id="NF011105">
    <property type="entry name" value="PRK14532.1"/>
    <property type="match status" value="1"/>
</dbReference>
<dbReference type="PANTHER" id="PTHR23359">
    <property type="entry name" value="NUCLEOTIDE KINASE"/>
    <property type="match status" value="1"/>
</dbReference>
<dbReference type="Pfam" id="PF00406">
    <property type="entry name" value="ADK"/>
    <property type="match status" value="1"/>
</dbReference>
<dbReference type="PRINTS" id="PR00094">
    <property type="entry name" value="ADENYLTKNASE"/>
</dbReference>
<dbReference type="SUPFAM" id="SSF52540">
    <property type="entry name" value="P-loop containing nucleoside triphosphate hydrolases"/>
    <property type="match status" value="1"/>
</dbReference>
<dbReference type="PROSITE" id="PS00113">
    <property type="entry name" value="ADENYLATE_KINASE"/>
    <property type="match status" value="1"/>
</dbReference>